<dbReference type="EC" id="1.1.1.25" evidence="1"/>
<dbReference type="EMBL" id="CR378674">
    <property type="protein sequence ID" value="CAG21827.1"/>
    <property type="status" value="ALT_INIT"/>
    <property type="molecule type" value="Genomic_DNA"/>
</dbReference>
<dbReference type="RefSeq" id="WP_041394594.1">
    <property type="nucleotide sequence ID" value="NC_006370.1"/>
</dbReference>
<dbReference type="SMR" id="Q6LLK1"/>
<dbReference type="STRING" id="298386.PBPRA3571"/>
<dbReference type="KEGG" id="ppr:PBPRA3571"/>
<dbReference type="eggNOG" id="COG0169">
    <property type="taxonomic scope" value="Bacteria"/>
</dbReference>
<dbReference type="HOGENOM" id="CLU_044063_2_1_6"/>
<dbReference type="UniPathway" id="UPA00053">
    <property type="reaction ID" value="UER00087"/>
</dbReference>
<dbReference type="Proteomes" id="UP000000593">
    <property type="component" value="Chromosome 1"/>
</dbReference>
<dbReference type="GO" id="GO:0005829">
    <property type="term" value="C:cytosol"/>
    <property type="evidence" value="ECO:0007669"/>
    <property type="project" value="TreeGrafter"/>
</dbReference>
<dbReference type="GO" id="GO:0050661">
    <property type="term" value="F:NADP binding"/>
    <property type="evidence" value="ECO:0007669"/>
    <property type="project" value="InterPro"/>
</dbReference>
<dbReference type="GO" id="GO:0004764">
    <property type="term" value="F:shikimate 3-dehydrogenase (NADP+) activity"/>
    <property type="evidence" value="ECO:0007669"/>
    <property type="project" value="UniProtKB-UniRule"/>
</dbReference>
<dbReference type="GO" id="GO:0008652">
    <property type="term" value="P:amino acid biosynthetic process"/>
    <property type="evidence" value="ECO:0007669"/>
    <property type="project" value="UniProtKB-KW"/>
</dbReference>
<dbReference type="GO" id="GO:0009073">
    <property type="term" value="P:aromatic amino acid family biosynthetic process"/>
    <property type="evidence" value="ECO:0007669"/>
    <property type="project" value="UniProtKB-KW"/>
</dbReference>
<dbReference type="GO" id="GO:0009423">
    <property type="term" value="P:chorismate biosynthetic process"/>
    <property type="evidence" value="ECO:0007669"/>
    <property type="project" value="UniProtKB-UniRule"/>
</dbReference>
<dbReference type="GO" id="GO:0019632">
    <property type="term" value="P:shikimate metabolic process"/>
    <property type="evidence" value="ECO:0007669"/>
    <property type="project" value="InterPro"/>
</dbReference>
<dbReference type="CDD" id="cd01065">
    <property type="entry name" value="NAD_bind_Shikimate_DH"/>
    <property type="match status" value="1"/>
</dbReference>
<dbReference type="FunFam" id="3.40.50.10860:FF:000006">
    <property type="entry name" value="Shikimate dehydrogenase (NADP(+))"/>
    <property type="match status" value="1"/>
</dbReference>
<dbReference type="FunFam" id="3.40.50.720:FF:000104">
    <property type="entry name" value="Shikimate dehydrogenase (NADP(+))"/>
    <property type="match status" value="1"/>
</dbReference>
<dbReference type="Gene3D" id="3.40.50.10860">
    <property type="entry name" value="Leucine Dehydrogenase, chain A, domain 1"/>
    <property type="match status" value="1"/>
</dbReference>
<dbReference type="Gene3D" id="3.40.50.720">
    <property type="entry name" value="NAD(P)-binding Rossmann-like Domain"/>
    <property type="match status" value="1"/>
</dbReference>
<dbReference type="HAMAP" id="MF_00222">
    <property type="entry name" value="Shikimate_DH_AroE"/>
    <property type="match status" value="1"/>
</dbReference>
<dbReference type="InterPro" id="IPR046346">
    <property type="entry name" value="Aminoacid_DH-like_N_sf"/>
</dbReference>
<dbReference type="InterPro" id="IPR036291">
    <property type="entry name" value="NAD(P)-bd_dom_sf"/>
</dbReference>
<dbReference type="InterPro" id="IPR041121">
    <property type="entry name" value="SDH_C"/>
</dbReference>
<dbReference type="InterPro" id="IPR011342">
    <property type="entry name" value="Shikimate_DH"/>
</dbReference>
<dbReference type="InterPro" id="IPR013708">
    <property type="entry name" value="Shikimate_DH-bd_N"/>
</dbReference>
<dbReference type="InterPro" id="IPR022893">
    <property type="entry name" value="Shikimate_DH_fam"/>
</dbReference>
<dbReference type="InterPro" id="IPR006151">
    <property type="entry name" value="Shikm_DH/Glu-tRNA_Rdtase"/>
</dbReference>
<dbReference type="NCBIfam" id="TIGR00507">
    <property type="entry name" value="aroE"/>
    <property type="match status" value="1"/>
</dbReference>
<dbReference type="NCBIfam" id="NF001310">
    <property type="entry name" value="PRK00258.1-2"/>
    <property type="match status" value="1"/>
</dbReference>
<dbReference type="PANTHER" id="PTHR21089:SF1">
    <property type="entry name" value="BIFUNCTIONAL 3-DEHYDROQUINATE DEHYDRATASE_SHIKIMATE DEHYDROGENASE, CHLOROPLASTIC"/>
    <property type="match status" value="1"/>
</dbReference>
<dbReference type="PANTHER" id="PTHR21089">
    <property type="entry name" value="SHIKIMATE DEHYDROGENASE"/>
    <property type="match status" value="1"/>
</dbReference>
<dbReference type="Pfam" id="PF18317">
    <property type="entry name" value="SDH_C"/>
    <property type="match status" value="1"/>
</dbReference>
<dbReference type="Pfam" id="PF01488">
    <property type="entry name" value="Shikimate_DH"/>
    <property type="match status" value="1"/>
</dbReference>
<dbReference type="Pfam" id="PF08501">
    <property type="entry name" value="Shikimate_dh_N"/>
    <property type="match status" value="1"/>
</dbReference>
<dbReference type="SUPFAM" id="SSF53223">
    <property type="entry name" value="Aminoacid dehydrogenase-like, N-terminal domain"/>
    <property type="match status" value="1"/>
</dbReference>
<dbReference type="SUPFAM" id="SSF51735">
    <property type="entry name" value="NAD(P)-binding Rossmann-fold domains"/>
    <property type="match status" value="1"/>
</dbReference>
<reference key="1">
    <citation type="journal article" date="2005" name="Science">
        <title>Life at depth: Photobacterium profundum genome sequence and expression analysis.</title>
        <authorList>
            <person name="Vezzi A."/>
            <person name="Campanaro S."/>
            <person name="D'Angelo M."/>
            <person name="Simonato F."/>
            <person name="Vitulo N."/>
            <person name="Lauro F.M."/>
            <person name="Cestaro A."/>
            <person name="Malacrida G."/>
            <person name="Simionati B."/>
            <person name="Cannata N."/>
            <person name="Romualdi C."/>
            <person name="Bartlett D.H."/>
            <person name="Valle G."/>
        </authorList>
    </citation>
    <scope>NUCLEOTIDE SEQUENCE [LARGE SCALE GENOMIC DNA]</scope>
    <source>
        <strain>ATCC BAA-1253 / SS9</strain>
    </source>
</reference>
<proteinExistence type="inferred from homology"/>
<feature type="chain" id="PRO_0000325144" description="Shikimate dehydrogenase (NADP(+))">
    <location>
        <begin position="1"/>
        <end position="273"/>
    </location>
</feature>
<feature type="active site" description="Proton acceptor" evidence="1">
    <location>
        <position position="65"/>
    </location>
</feature>
<feature type="binding site" evidence="1">
    <location>
        <begin position="14"/>
        <end position="16"/>
    </location>
    <ligand>
        <name>shikimate</name>
        <dbReference type="ChEBI" id="CHEBI:36208"/>
    </ligand>
</feature>
<feature type="binding site" evidence="1">
    <location>
        <position position="61"/>
    </location>
    <ligand>
        <name>shikimate</name>
        <dbReference type="ChEBI" id="CHEBI:36208"/>
    </ligand>
</feature>
<feature type="binding site" evidence="1">
    <location>
        <position position="77"/>
    </location>
    <ligand>
        <name>NADP(+)</name>
        <dbReference type="ChEBI" id="CHEBI:58349"/>
    </ligand>
</feature>
<feature type="binding site" evidence="1">
    <location>
        <position position="86"/>
    </location>
    <ligand>
        <name>shikimate</name>
        <dbReference type="ChEBI" id="CHEBI:36208"/>
    </ligand>
</feature>
<feature type="binding site" evidence="1">
    <location>
        <position position="102"/>
    </location>
    <ligand>
        <name>shikimate</name>
        <dbReference type="ChEBI" id="CHEBI:36208"/>
    </ligand>
</feature>
<feature type="binding site" evidence="1">
    <location>
        <begin position="126"/>
        <end position="130"/>
    </location>
    <ligand>
        <name>NADP(+)</name>
        <dbReference type="ChEBI" id="CHEBI:58349"/>
    </ligand>
</feature>
<feature type="binding site" evidence="1">
    <location>
        <begin position="150"/>
        <end position="155"/>
    </location>
    <ligand>
        <name>NADP(+)</name>
        <dbReference type="ChEBI" id="CHEBI:58349"/>
    </ligand>
</feature>
<feature type="binding site" evidence="1">
    <location>
        <position position="214"/>
    </location>
    <ligand>
        <name>NADP(+)</name>
        <dbReference type="ChEBI" id="CHEBI:58349"/>
    </ligand>
</feature>
<feature type="binding site" evidence="1">
    <location>
        <position position="216"/>
    </location>
    <ligand>
        <name>shikimate</name>
        <dbReference type="ChEBI" id="CHEBI:36208"/>
    </ligand>
</feature>
<feature type="binding site" evidence="1">
    <location>
        <position position="238"/>
    </location>
    <ligand>
        <name>NADP(+)</name>
        <dbReference type="ChEBI" id="CHEBI:58349"/>
    </ligand>
</feature>
<name>AROE_PHOPR</name>
<protein>
    <recommendedName>
        <fullName evidence="1">Shikimate dehydrogenase (NADP(+))</fullName>
        <shortName evidence="1">SDH</shortName>
        <ecNumber evidence="1">1.1.1.25</ecNumber>
    </recommendedName>
</protein>
<keyword id="KW-0028">Amino-acid biosynthesis</keyword>
<keyword id="KW-0057">Aromatic amino acid biosynthesis</keyword>
<keyword id="KW-0521">NADP</keyword>
<keyword id="KW-0560">Oxidoreductase</keyword>
<keyword id="KW-1185">Reference proteome</keyword>
<comment type="function">
    <text evidence="1">Involved in the biosynthesis of the chorismate, which leads to the biosynthesis of aromatic amino acids. Catalyzes the reversible NADPH linked reduction of 3-dehydroshikimate (DHSA) to yield shikimate (SA).</text>
</comment>
<comment type="catalytic activity">
    <reaction evidence="1">
        <text>shikimate + NADP(+) = 3-dehydroshikimate + NADPH + H(+)</text>
        <dbReference type="Rhea" id="RHEA:17737"/>
        <dbReference type="ChEBI" id="CHEBI:15378"/>
        <dbReference type="ChEBI" id="CHEBI:16630"/>
        <dbReference type="ChEBI" id="CHEBI:36208"/>
        <dbReference type="ChEBI" id="CHEBI:57783"/>
        <dbReference type="ChEBI" id="CHEBI:58349"/>
        <dbReference type="EC" id="1.1.1.25"/>
    </reaction>
</comment>
<comment type="pathway">
    <text evidence="1">Metabolic intermediate biosynthesis; chorismate biosynthesis; chorismate from D-erythrose 4-phosphate and phosphoenolpyruvate: step 4/7.</text>
</comment>
<comment type="subunit">
    <text evidence="1">Homodimer.</text>
</comment>
<comment type="similarity">
    <text evidence="1">Belongs to the shikimate dehydrogenase family.</text>
</comment>
<comment type="sequence caution" evidence="2">
    <conflict type="erroneous initiation">
        <sequence resource="EMBL-CDS" id="CAG21827"/>
    </conflict>
    <text>Extended N-terminus.</text>
</comment>
<sequence>MDKYVVFGNPIAQSKSPFIHTLFARQTAQKMEYTAELAPADGFKLAADNFFSAGGRGCNITAPFKEDAYQYATQLSERAKLAGAVNTLKKLDDGGILGDNTDGEGLVQDLLLNQVELAGKRILLVGAGGAARGVILPLLAQNPVELVITNRTLSKAQQLADLFAPFGSVSSAAIDTLNQPDFDVIINSTSAGLSGQLPGLSESLIKHDMVCYDMVYSAQITAFNLWARDLGAGKVIDGLGMLVGQAAESFMLWRGLRPGAKQVLRELRRILQE</sequence>
<organism>
    <name type="scientific">Photobacterium profundum (strain SS9)</name>
    <dbReference type="NCBI Taxonomy" id="298386"/>
    <lineage>
        <taxon>Bacteria</taxon>
        <taxon>Pseudomonadati</taxon>
        <taxon>Pseudomonadota</taxon>
        <taxon>Gammaproteobacteria</taxon>
        <taxon>Vibrionales</taxon>
        <taxon>Vibrionaceae</taxon>
        <taxon>Photobacterium</taxon>
    </lineage>
</organism>
<accession>Q6LLK1</accession>
<gene>
    <name evidence="1" type="primary">aroE</name>
    <name type="ordered locus">PBPRA3571</name>
</gene>
<evidence type="ECO:0000255" key="1">
    <source>
        <dbReference type="HAMAP-Rule" id="MF_00222"/>
    </source>
</evidence>
<evidence type="ECO:0000305" key="2"/>